<protein>
    <recommendedName>
        <fullName evidence="2">Bradykinin-potentiating peptide Brachy</fullName>
        <shortName evidence="2">BPP-Brachy</shortName>
        <shortName evidence="2">BPP-BrachyNH2</shortName>
    </recommendedName>
    <alternativeName>
        <fullName evidence="2">Proline-rich oligopeptide</fullName>
        <shortName evidence="2">PRO</shortName>
        <shortName evidence="3">Proline-rich peptide</shortName>
    </alternativeName>
</protein>
<dbReference type="GO" id="GO:0005576">
    <property type="term" value="C:extracellular region"/>
    <property type="evidence" value="ECO:0007669"/>
    <property type="project" value="UniProtKB-SubCell"/>
</dbReference>
<dbReference type="GO" id="GO:0097746">
    <property type="term" value="P:blood vessel diameter maintenance"/>
    <property type="evidence" value="ECO:0007669"/>
    <property type="project" value="UniProtKB-KW"/>
</dbReference>
<dbReference type="GO" id="GO:0008217">
    <property type="term" value="P:regulation of blood pressure"/>
    <property type="evidence" value="ECO:0007669"/>
    <property type="project" value="UniProtKB-KW"/>
</dbReference>
<evidence type="ECO:0000269" key="1">
    <source>
    </source>
</evidence>
<evidence type="ECO:0000303" key="2">
    <source>
    </source>
</evidence>
<evidence type="ECO:0000305" key="3"/>
<evidence type="ECO:0000305" key="4">
    <source>
    </source>
</evidence>
<feature type="peptide" id="PRO_0000455436" description="Bradykinin-potentiating peptide Brachy" evidence="1">
    <location>
        <begin position="1"/>
        <end position="8"/>
    </location>
</feature>
<feature type="modified residue" description="Proline amide; partial" evidence="1">
    <location>
        <position position="8"/>
    </location>
</feature>
<proteinExistence type="evidence at protein level"/>
<accession>P0DV72</accession>
<reference key="1">
    <citation type="journal article" date="2015" name="PLoS ONE">
        <title>A novel vasoactive proline-rich oligopeptide from the skin secretion of the frog Brachycephalus ephippium.</title>
        <authorList>
            <person name="Arcanjo D.D."/>
            <person name="Vasconcelos A.G."/>
            <person name="Comerma-Steffensen S.G."/>
            <person name="Jesus J.R."/>
            <person name="Silva L.P."/>
            <person name="Pires Junior O.R."/>
            <person name="Costa-Neto C.M."/>
            <person name="Oliveira E.B."/>
            <person name="Migliolo L."/>
            <person name="Franco O.L."/>
            <person name="Restini C.B."/>
            <person name="Paulo M."/>
            <person name="Bendhack L.M."/>
            <person name="Bemquerer M.P."/>
            <person name="Oliveira A.P."/>
            <person name="Simonsen U."/>
            <person name="Leite J.R."/>
        </authorList>
    </citation>
    <scope>PROTEIN SEQUENCE</scope>
    <scope>FUNCTION</scope>
    <scope>SUBCELLULAR LOCATION</scope>
    <scope>3D-STRUCTURE MODELING OF BPP-BRACHYNH2 IN COMPLEX WITH ACE</scope>
    <scope>MASS SPECTROMETRY</scope>
    <scope>PARTIAL AMIDATION AT PRO-8</scope>
    <scope>SYNTHESIS OF THE AMIDATED PEPTIDE</scope>
    <source>
        <tissue>Skin secretion</tissue>
    </source>
</reference>
<comment type="function">
    <text evidence="1">The amidated peptide increases the release of nitric oxid (NO) and that NO mediates the endothelium-dependent vasodilatation. In addition, it inhibits efficiently angiotensin I-converting enzyme (ACE) in rat serum (IC(50)=8.2 uM). 3D-structure modeling of this peptide in complex with ACE suggests it acts by inhibiting the ACE C-terminal catalytic site.</text>
</comment>
<comment type="subcellular location">
    <subcellularLocation>
        <location evidence="1">Secreted</location>
    </subcellularLocation>
</comment>
<comment type="tissue specificity">
    <text evidence="4">Expressed by the skin gland.</text>
</comment>
<comment type="PTM">
    <text evidence="1">Both amidated and non-amidated peptides have been observed in skin secretions.</text>
</comment>
<comment type="mass spectrometry">
    <text>non-amidated.</text>
</comment>
<comment type="mass spectrometry">
    <text>amidated.</text>
</comment>
<comment type="similarity">
    <text evidence="3">Belongs to the bradykinin-potentiating peptide family.</text>
</comment>
<name>BPP_BRAEP</name>
<sequence>WPPPKVSP</sequence>
<organism>
    <name type="scientific">Brachycephalus ephippium</name>
    <name type="common">Pumpkin toadlet</name>
    <name type="synonym">Bufo ephippium</name>
    <dbReference type="NCBI Taxonomy" id="164302"/>
    <lineage>
        <taxon>Eukaryota</taxon>
        <taxon>Metazoa</taxon>
        <taxon>Chordata</taxon>
        <taxon>Craniata</taxon>
        <taxon>Vertebrata</taxon>
        <taxon>Euteleostomi</taxon>
        <taxon>Amphibia</taxon>
        <taxon>Batrachia</taxon>
        <taxon>Anura</taxon>
        <taxon>Neobatrachia</taxon>
        <taxon>Hyloidea</taxon>
        <taxon>Brachycephalidae</taxon>
        <taxon>Brachycephalus</taxon>
    </lineage>
</organism>
<keyword id="KW-0027">Amidation</keyword>
<keyword id="KW-0903">Direct protein sequencing</keyword>
<keyword id="KW-0382">Hypotensive agent</keyword>
<keyword id="KW-0964">Secreted</keyword>
<keyword id="KW-0838">Vasoactive</keyword>